<gene>
    <name type="primary">pdhk-2</name>
    <name type="ORF">ZK370.5</name>
</gene>
<name>PDHK2_CAEEL</name>
<accession>Q02332</accession>
<comment type="function">
    <text evidence="2 5">Inhibits the mitochondrial pyruvate dehydrogenase complex by phosphorylation of the E1 alpha subunit, thus contributing to the regulation of glucose metabolism (By similarity). Required for normal lifespan (PubMed:36173858).</text>
</comment>
<comment type="catalytic activity">
    <reaction>
        <text>L-seryl-[pyruvate dehydrogenase E1 alpha subunit] + ATP = O-phospho-L-seryl-[pyruvate dehydrogenase E1 alpha subunit] + ADP + H(+)</text>
        <dbReference type="Rhea" id="RHEA:23052"/>
        <dbReference type="Rhea" id="RHEA-COMP:13689"/>
        <dbReference type="Rhea" id="RHEA-COMP:13690"/>
        <dbReference type="ChEBI" id="CHEBI:15378"/>
        <dbReference type="ChEBI" id="CHEBI:29999"/>
        <dbReference type="ChEBI" id="CHEBI:30616"/>
        <dbReference type="ChEBI" id="CHEBI:83421"/>
        <dbReference type="ChEBI" id="CHEBI:456216"/>
        <dbReference type="EC" id="2.7.11.2"/>
    </reaction>
</comment>
<comment type="subcellular location">
    <subcellularLocation>
        <location evidence="2">Mitochondrion matrix</location>
    </subcellularLocation>
</comment>
<comment type="disruption phenotype">
    <text evidence="5">RNAi-mediated knockdown increases lifespan.</text>
</comment>
<comment type="similarity">
    <text evidence="6">Belongs to the PDK/BCKDK protein kinase family.</text>
</comment>
<evidence type="ECO:0000250" key="1"/>
<evidence type="ECO:0000250" key="2">
    <source>
        <dbReference type="UniProtKB" id="Q15118"/>
    </source>
</evidence>
<evidence type="ECO:0000255" key="3"/>
<evidence type="ECO:0000255" key="4">
    <source>
        <dbReference type="PROSITE-ProRule" id="PRU00107"/>
    </source>
</evidence>
<evidence type="ECO:0000269" key="5">
    <source>
    </source>
</evidence>
<evidence type="ECO:0000305" key="6"/>
<reference key="1">
    <citation type="journal article" date="1994" name="Nature">
        <title>2.2 Mb of contiguous nucleotide sequence from chromosome III of C. elegans.</title>
        <authorList>
            <person name="Wilson R."/>
            <person name="Ainscough R."/>
            <person name="Anderson K."/>
            <person name="Baynes C."/>
            <person name="Berks M."/>
            <person name="Bonfield J."/>
            <person name="Burton J."/>
            <person name="Connell M."/>
            <person name="Copsey T."/>
            <person name="Cooper J."/>
            <person name="Coulson A."/>
            <person name="Craxton M."/>
            <person name="Dear S."/>
            <person name="Du Z."/>
            <person name="Durbin R."/>
            <person name="Favello A."/>
            <person name="Fraser A."/>
            <person name="Fulton L."/>
            <person name="Gardner A."/>
            <person name="Green P."/>
            <person name="Hawkins T."/>
            <person name="Hillier L."/>
            <person name="Jier M."/>
            <person name="Johnston L."/>
            <person name="Jones M."/>
            <person name="Kershaw J."/>
            <person name="Kirsten J."/>
            <person name="Laisster N."/>
            <person name="Latreille P."/>
            <person name="Lightning J."/>
            <person name="Lloyd C."/>
            <person name="Mortimore B."/>
            <person name="O'Callaghan M."/>
            <person name="Parsons J."/>
            <person name="Percy C."/>
            <person name="Rifken L."/>
            <person name="Roopra A."/>
            <person name="Saunders D."/>
            <person name="Shownkeen R."/>
            <person name="Sims M."/>
            <person name="Smaldon N."/>
            <person name="Smith A."/>
            <person name="Smith M."/>
            <person name="Sonnhammer E."/>
            <person name="Staden R."/>
            <person name="Sulston J."/>
            <person name="Thierry-Mieg J."/>
            <person name="Thomas K."/>
            <person name="Vaudin M."/>
            <person name="Vaughan K."/>
            <person name="Waterston R."/>
            <person name="Watson A."/>
            <person name="Weinstock L."/>
            <person name="Wilkinson-Sproat J."/>
            <person name="Wohldman P."/>
        </authorList>
    </citation>
    <scope>NUCLEOTIDE SEQUENCE [LARGE SCALE GENOMIC DNA]</scope>
    <source>
        <strain>Bristol N2</strain>
    </source>
</reference>
<reference key="2">
    <citation type="journal article" date="1998" name="Science">
        <title>Genome sequence of the nematode C. elegans: a platform for investigating biology.</title>
        <authorList>
            <consortium name="The C. elegans sequencing consortium"/>
        </authorList>
    </citation>
    <scope>NUCLEOTIDE SEQUENCE [LARGE SCALE GENOMIC DNA]</scope>
    <source>
        <strain>Bristol N2</strain>
    </source>
</reference>
<reference evidence="6" key="3">
    <citation type="journal article" date="2022" name="Science">
        <title>Sex- and age-dependent genetics of longevity in a heterogeneous mouse population.</title>
        <authorList>
            <person name="Bou Sleiman M."/>
            <person name="Roy S."/>
            <person name="Gao A.W."/>
            <person name="Sadler M.C."/>
            <person name="von Alvensleben G.V.G."/>
            <person name="Li H."/>
            <person name="Sen S."/>
            <person name="Harrison D.E."/>
            <person name="Nelson J.F."/>
            <person name="Strong R."/>
            <person name="Miller R.A."/>
            <person name="Kutalik Z."/>
            <person name="Williams R.W."/>
            <person name="Auwerx J."/>
        </authorList>
    </citation>
    <scope>FUNCTION</scope>
    <scope>DISRUPTION PHENOTYPE</scope>
</reference>
<sequence length="401" mass="45282">MRFSRKLLGPFVGSLAKKLDYYSQFQPSSLTIQQYLDFGRIGTSANSYTFLKNELLVRLANIMQEFTLLPPKLLQMPSSKMVSNWYAESFEDLLLFEASDSSPEQVARFNDQLTVVLKRHAHVVETMAEGLIELRESDGVDIASEKGIQYFLDRFYINRISIRMLQNQHLVVFGNVLPESPRHVGCIDPACDVESVVYDAFENARFLCDRYYLTSPSMKLEMHNAVEKGKPISIVAVPSHLYHMMFELFKNAMRATVEYHGVDDDLPDIKVYVVKGQEDLSIKICDRGGGVSRTILERLYNYMYSTAPPPPRDGTQAPLAGYGYGLPLSRLYARYFLGDLFLVSMEGHGTDACIYLKAVPVEASEVLPIYSTSSRRNLTMGPQVADWSHHVPGQGNRPAQS</sequence>
<protein>
    <recommendedName>
        <fullName>Probable [pyruvate dehydrogenase (acetyl-transferring)] kinase, mitochondrial</fullName>
        <shortName>Pyruvate dehydrogenase kinase</shortName>
        <ecNumber>2.7.11.2</ecNumber>
    </recommendedName>
</protein>
<feature type="transit peptide" description="Mitochondrion" evidence="3">
    <location>
        <begin position="1"/>
        <end status="unknown"/>
    </location>
</feature>
<feature type="chain" id="PRO_0000023450" description="Probable [pyruvate dehydrogenase (acetyl-transferring)] kinase, mitochondrial">
    <location>
        <begin status="unknown"/>
        <end position="401"/>
    </location>
</feature>
<feature type="domain" description="Histidine kinase" evidence="4">
    <location>
        <begin position="131"/>
        <end position="360"/>
    </location>
</feature>
<feature type="binding site" evidence="1">
    <location>
        <begin position="247"/>
        <end position="254"/>
    </location>
    <ligand>
        <name>ATP</name>
        <dbReference type="ChEBI" id="CHEBI:30616"/>
    </ligand>
</feature>
<feature type="binding site" evidence="1">
    <location>
        <position position="286"/>
    </location>
    <ligand>
        <name>ATP</name>
        <dbReference type="ChEBI" id="CHEBI:30616"/>
    </ligand>
</feature>
<feature type="binding site" evidence="1">
    <location>
        <begin position="305"/>
        <end position="306"/>
    </location>
    <ligand>
        <name>ATP</name>
        <dbReference type="ChEBI" id="CHEBI:30616"/>
    </ligand>
</feature>
<feature type="binding site" evidence="1">
    <location>
        <begin position="321"/>
        <end position="326"/>
    </location>
    <ligand>
        <name>ATP</name>
        <dbReference type="ChEBI" id="CHEBI:30616"/>
    </ligand>
</feature>
<proteinExistence type="inferred from homology"/>
<organism>
    <name type="scientific">Caenorhabditis elegans</name>
    <dbReference type="NCBI Taxonomy" id="6239"/>
    <lineage>
        <taxon>Eukaryota</taxon>
        <taxon>Metazoa</taxon>
        <taxon>Ecdysozoa</taxon>
        <taxon>Nematoda</taxon>
        <taxon>Chromadorea</taxon>
        <taxon>Rhabditida</taxon>
        <taxon>Rhabditina</taxon>
        <taxon>Rhabditomorpha</taxon>
        <taxon>Rhabditoidea</taxon>
        <taxon>Rhabditidae</taxon>
        <taxon>Peloderinae</taxon>
        <taxon>Caenorhabditis</taxon>
    </lineage>
</organism>
<dbReference type="EC" id="2.7.11.2"/>
<dbReference type="EMBL" id="FO080164">
    <property type="protein sequence ID" value="CCD61725.1"/>
    <property type="molecule type" value="Genomic_DNA"/>
</dbReference>
<dbReference type="PIR" id="S44666">
    <property type="entry name" value="S44666"/>
</dbReference>
<dbReference type="RefSeq" id="NP_498928.1">
    <property type="nucleotide sequence ID" value="NM_066527.6"/>
</dbReference>
<dbReference type="SMR" id="Q02332"/>
<dbReference type="BioGRID" id="41429">
    <property type="interactions" value="10"/>
</dbReference>
<dbReference type="DIP" id="DIP-26171N"/>
<dbReference type="FunCoup" id="Q02332">
    <property type="interactions" value="2437"/>
</dbReference>
<dbReference type="STRING" id="6239.ZK370.5.1"/>
<dbReference type="PaxDb" id="6239-ZK370.5"/>
<dbReference type="PeptideAtlas" id="Q02332"/>
<dbReference type="EnsemblMetazoa" id="ZK370.5.1">
    <property type="protein sequence ID" value="ZK370.5.1"/>
    <property type="gene ID" value="WBGene00022719"/>
</dbReference>
<dbReference type="GeneID" id="176226"/>
<dbReference type="KEGG" id="cel:CELE_ZK370.5"/>
<dbReference type="AGR" id="WB:WBGene00022719"/>
<dbReference type="CTD" id="176226"/>
<dbReference type="WormBase" id="ZK370.5">
    <property type="protein sequence ID" value="CE00397"/>
    <property type="gene ID" value="WBGene00022719"/>
    <property type="gene designation" value="pdhk-2"/>
</dbReference>
<dbReference type="eggNOG" id="KOG0787">
    <property type="taxonomic scope" value="Eukaryota"/>
</dbReference>
<dbReference type="GeneTree" id="ENSGT01030000234646"/>
<dbReference type="HOGENOM" id="CLU_023861_1_0_1"/>
<dbReference type="InParanoid" id="Q02332"/>
<dbReference type="OMA" id="DMSRNAP"/>
<dbReference type="OrthoDB" id="241648at2759"/>
<dbReference type="PhylomeDB" id="Q02332"/>
<dbReference type="Reactome" id="R-CEL-204174">
    <property type="pathway name" value="Regulation of pyruvate dehydrogenase (PDH) complex"/>
</dbReference>
<dbReference type="Reactome" id="R-CEL-5362517">
    <property type="pathway name" value="Signaling by Retinoic Acid"/>
</dbReference>
<dbReference type="Reactome" id="R-CEL-9837999">
    <property type="pathway name" value="Mitochondrial protein degradation"/>
</dbReference>
<dbReference type="PRO" id="PR:Q02332"/>
<dbReference type="Proteomes" id="UP000001940">
    <property type="component" value="Chromosome III"/>
</dbReference>
<dbReference type="Bgee" id="WBGene00022719">
    <property type="expression patterns" value="Expressed in germ line (C elegans) and 4 other cell types or tissues"/>
</dbReference>
<dbReference type="GO" id="GO:0005737">
    <property type="term" value="C:cytoplasm"/>
    <property type="evidence" value="ECO:0000314"/>
    <property type="project" value="WormBase"/>
</dbReference>
<dbReference type="GO" id="GO:0005759">
    <property type="term" value="C:mitochondrial matrix"/>
    <property type="evidence" value="ECO:0007669"/>
    <property type="project" value="UniProtKB-SubCell"/>
</dbReference>
<dbReference type="GO" id="GO:0005739">
    <property type="term" value="C:mitochondrion"/>
    <property type="evidence" value="ECO:0000318"/>
    <property type="project" value="GO_Central"/>
</dbReference>
<dbReference type="GO" id="GO:0048471">
    <property type="term" value="C:perinuclear region of cytoplasm"/>
    <property type="evidence" value="ECO:0000314"/>
    <property type="project" value="WormBase"/>
</dbReference>
<dbReference type="GO" id="GO:0005524">
    <property type="term" value="F:ATP binding"/>
    <property type="evidence" value="ECO:0007669"/>
    <property type="project" value="UniProtKB-KW"/>
</dbReference>
<dbReference type="GO" id="GO:0004740">
    <property type="term" value="F:pyruvate dehydrogenase (acetyl-transferring) kinase activity"/>
    <property type="evidence" value="ECO:0000318"/>
    <property type="project" value="GO_Central"/>
</dbReference>
<dbReference type="GO" id="GO:0010510">
    <property type="term" value="P:regulation of acetyl-CoA biosynthetic process from pyruvate"/>
    <property type="evidence" value="ECO:0000318"/>
    <property type="project" value="GO_Central"/>
</dbReference>
<dbReference type="GO" id="GO:0010906">
    <property type="term" value="P:regulation of glucose metabolic process"/>
    <property type="evidence" value="ECO:0000318"/>
    <property type="project" value="GO_Central"/>
</dbReference>
<dbReference type="CDD" id="cd16929">
    <property type="entry name" value="HATPase_PDK-like"/>
    <property type="match status" value="1"/>
</dbReference>
<dbReference type="FunFam" id="3.30.565.10:FF:000007">
    <property type="entry name" value="Mitochondrial pyruvate dehydrogenase kinase isoform 2"/>
    <property type="match status" value="1"/>
</dbReference>
<dbReference type="Gene3D" id="1.20.140.20">
    <property type="entry name" value="Alpha-ketoacid/pyruvate dehydrogenase kinase, N-terminal domain"/>
    <property type="match status" value="1"/>
</dbReference>
<dbReference type="Gene3D" id="3.30.565.10">
    <property type="entry name" value="Histidine kinase-like ATPase, C-terminal domain"/>
    <property type="match status" value="1"/>
</dbReference>
<dbReference type="InterPro" id="IPR036784">
    <property type="entry name" value="AK/P_DHK_N_sf"/>
</dbReference>
<dbReference type="InterPro" id="IPR018955">
    <property type="entry name" value="BCDHK/PDK_N"/>
</dbReference>
<dbReference type="InterPro" id="IPR039028">
    <property type="entry name" value="BCKD/PDK"/>
</dbReference>
<dbReference type="InterPro" id="IPR036890">
    <property type="entry name" value="HATPase_C_sf"/>
</dbReference>
<dbReference type="InterPro" id="IPR005467">
    <property type="entry name" value="His_kinase_dom"/>
</dbReference>
<dbReference type="PANTHER" id="PTHR11947:SF3">
    <property type="entry name" value="[PYRUVATE DEHYDROGENASE (ACETYL-TRANSFERRING)] KINASE, MITOCHONDRIAL"/>
    <property type="match status" value="1"/>
</dbReference>
<dbReference type="PANTHER" id="PTHR11947">
    <property type="entry name" value="PYRUVATE DEHYDROGENASE KINASE"/>
    <property type="match status" value="1"/>
</dbReference>
<dbReference type="Pfam" id="PF10436">
    <property type="entry name" value="BCDHK_Adom3"/>
    <property type="match status" value="1"/>
</dbReference>
<dbReference type="Pfam" id="PF02518">
    <property type="entry name" value="HATPase_c"/>
    <property type="match status" value="1"/>
</dbReference>
<dbReference type="SMART" id="SM00387">
    <property type="entry name" value="HATPase_c"/>
    <property type="match status" value="1"/>
</dbReference>
<dbReference type="SUPFAM" id="SSF69012">
    <property type="entry name" value="alpha-ketoacid dehydrogenase kinase, N-terminal domain"/>
    <property type="match status" value="1"/>
</dbReference>
<dbReference type="SUPFAM" id="SSF55874">
    <property type="entry name" value="ATPase domain of HSP90 chaperone/DNA topoisomerase II/histidine kinase"/>
    <property type="match status" value="1"/>
</dbReference>
<dbReference type="PROSITE" id="PS50109">
    <property type="entry name" value="HIS_KIN"/>
    <property type="match status" value="1"/>
</dbReference>
<keyword id="KW-0067">ATP-binding</keyword>
<keyword id="KW-0418">Kinase</keyword>
<keyword id="KW-0496">Mitochondrion</keyword>
<keyword id="KW-0547">Nucleotide-binding</keyword>
<keyword id="KW-1185">Reference proteome</keyword>
<keyword id="KW-0808">Transferase</keyword>
<keyword id="KW-0809">Transit peptide</keyword>